<organism>
    <name type="scientific">Campylobacter jejuni subsp. jejuni serotype O:2 (strain ATCC 700819 / NCTC 11168)</name>
    <dbReference type="NCBI Taxonomy" id="192222"/>
    <lineage>
        <taxon>Bacteria</taxon>
        <taxon>Pseudomonadati</taxon>
        <taxon>Campylobacterota</taxon>
        <taxon>Epsilonproteobacteria</taxon>
        <taxon>Campylobacterales</taxon>
        <taxon>Campylobacteraceae</taxon>
        <taxon>Campylobacter</taxon>
    </lineage>
</organism>
<protein>
    <recommendedName>
        <fullName evidence="2">Ornithine carbamoyltransferase, anabolic</fullName>
        <shortName evidence="2">OTCase</shortName>
        <ecNumber evidence="1">2.1.3.3</ecNumber>
    </recommendedName>
</protein>
<feature type="chain" id="PRO_0000112904" description="Ornithine carbamoyltransferase, anabolic">
    <location>
        <begin position="1"/>
        <end position="306"/>
    </location>
</feature>
<feature type="binding site" evidence="1">
    <location>
        <begin position="46"/>
        <end position="49"/>
    </location>
    <ligand>
        <name>carbamoyl phosphate</name>
        <dbReference type="ChEBI" id="CHEBI:58228"/>
    </ligand>
</feature>
<feature type="binding site" evidence="1">
    <location>
        <position position="73"/>
    </location>
    <ligand>
        <name>carbamoyl phosphate</name>
        <dbReference type="ChEBI" id="CHEBI:58228"/>
    </ligand>
</feature>
<feature type="binding site" evidence="1">
    <location>
        <position position="97"/>
    </location>
    <ligand>
        <name>carbamoyl phosphate</name>
        <dbReference type="ChEBI" id="CHEBI:58228"/>
    </ligand>
</feature>
<feature type="binding site" evidence="1">
    <location>
        <begin position="124"/>
        <end position="127"/>
    </location>
    <ligand>
        <name>carbamoyl phosphate</name>
        <dbReference type="ChEBI" id="CHEBI:58228"/>
    </ligand>
</feature>
<feature type="binding site" evidence="1">
    <location>
        <position position="156"/>
    </location>
    <ligand>
        <name>L-ornithine</name>
        <dbReference type="ChEBI" id="CHEBI:46911"/>
    </ligand>
</feature>
<feature type="binding site" evidence="1">
    <location>
        <position position="220"/>
    </location>
    <ligand>
        <name>L-ornithine</name>
        <dbReference type="ChEBI" id="CHEBI:46911"/>
    </ligand>
</feature>
<feature type="binding site" evidence="1">
    <location>
        <begin position="224"/>
        <end position="225"/>
    </location>
    <ligand>
        <name>L-ornithine</name>
        <dbReference type="ChEBI" id="CHEBI:46911"/>
    </ligand>
</feature>
<feature type="binding site" evidence="1">
    <location>
        <begin position="260"/>
        <end position="261"/>
    </location>
    <ligand>
        <name>carbamoyl phosphate</name>
        <dbReference type="ChEBI" id="CHEBI:58228"/>
    </ligand>
</feature>
<feature type="binding site" evidence="1">
    <location>
        <position position="288"/>
    </location>
    <ligand>
        <name>carbamoyl phosphate</name>
        <dbReference type="ChEBI" id="CHEBI:58228"/>
    </ligand>
</feature>
<feature type="helix" evidence="4">
    <location>
        <begin position="7"/>
        <end position="9"/>
    </location>
</feature>
<feature type="helix" evidence="4">
    <location>
        <begin position="12"/>
        <end position="27"/>
    </location>
</feature>
<feature type="turn" evidence="4">
    <location>
        <begin position="32"/>
        <end position="35"/>
    </location>
</feature>
<feature type="strand" evidence="4">
    <location>
        <begin position="37"/>
        <end position="44"/>
    </location>
</feature>
<feature type="helix" evidence="4">
    <location>
        <begin position="47"/>
        <end position="59"/>
    </location>
</feature>
<feature type="strand" evidence="4">
    <location>
        <begin position="63"/>
        <end position="67"/>
    </location>
</feature>
<feature type="turn" evidence="4">
    <location>
        <begin position="69"/>
        <end position="71"/>
    </location>
</feature>
<feature type="turn" evidence="4">
    <location>
        <begin position="74"/>
        <end position="76"/>
    </location>
</feature>
<feature type="helix" evidence="4">
    <location>
        <begin position="80"/>
        <end position="90"/>
    </location>
</feature>
<feature type="strand" evidence="4">
    <location>
        <begin position="91"/>
        <end position="97"/>
    </location>
</feature>
<feature type="helix" evidence="4">
    <location>
        <begin position="101"/>
        <end position="110"/>
    </location>
</feature>
<feature type="strand" evidence="4">
    <location>
        <begin position="115"/>
        <end position="118"/>
    </location>
</feature>
<feature type="helix" evidence="4">
    <location>
        <begin position="125"/>
        <end position="137"/>
    </location>
</feature>
<feature type="helix" evidence="4">
    <location>
        <begin position="142"/>
        <end position="144"/>
    </location>
</feature>
<feature type="strand" evidence="4">
    <location>
        <begin position="147"/>
        <end position="152"/>
    </location>
</feature>
<feature type="helix" evidence="4">
    <location>
        <begin position="156"/>
        <end position="168"/>
    </location>
</feature>
<feature type="strand" evidence="4">
    <location>
        <begin position="171"/>
        <end position="175"/>
    </location>
</feature>
<feature type="helix" evidence="4">
    <location>
        <begin position="184"/>
        <end position="197"/>
    </location>
</feature>
<feature type="strand" evidence="4">
    <location>
        <begin position="200"/>
        <end position="205"/>
    </location>
</feature>
<feature type="helix" evidence="4">
    <location>
        <begin position="207"/>
        <end position="211"/>
    </location>
</feature>
<feature type="strand" evidence="4">
    <location>
        <begin position="215"/>
        <end position="219"/>
    </location>
</feature>
<feature type="helix" evidence="4">
    <location>
        <begin position="227"/>
        <end position="230"/>
    </location>
</feature>
<feature type="helix" evidence="4">
    <location>
        <begin position="231"/>
        <end position="237"/>
    </location>
</feature>
<feature type="helix" evidence="4">
    <location>
        <begin position="238"/>
        <end position="241"/>
    </location>
</feature>
<feature type="helix" evidence="4">
    <location>
        <begin position="245"/>
        <end position="250"/>
    </location>
</feature>
<feature type="strand" evidence="4">
    <location>
        <begin position="256"/>
        <end position="259"/>
    </location>
</feature>
<feature type="turn" evidence="4">
    <location>
        <begin position="266"/>
        <end position="268"/>
    </location>
</feature>
<feature type="helix" evidence="4">
    <location>
        <begin position="271"/>
        <end position="276"/>
    </location>
</feature>
<feature type="helix" evidence="4">
    <location>
        <begin position="278"/>
        <end position="301"/>
    </location>
</feature>
<gene>
    <name evidence="1" type="primary">argF</name>
    <name type="ordered locus">Cj0994c</name>
</gene>
<name>OTCA_CAMJE</name>
<reference key="1">
    <citation type="journal article" date="2000" name="Nature">
        <title>The genome sequence of the food-borne pathogen Campylobacter jejuni reveals hypervariable sequences.</title>
        <authorList>
            <person name="Parkhill J."/>
            <person name="Wren B.W."/>
            <person name="Mungall K.L."/>
            <person name="Ketley J.M."/>
            <person name="Churcher C.M."/>
            <person name="Basham D."/>
            <person name="Chillingworth T."/>
            <person name="Davies R.M."/>
            <person name="Feltwell T."/>
            <person name="Holroyd S."/>
            <person name="Jagels K."/>
            <person name="Karlyshev A.V."/>
            <person name="Moule S."/>
            <person name="Pallen M.J."/>
            <person name="Penn C.W."/>
            <person name="Quail M.A."/>
            <person name="Rajandream M.A."/>
            <person name="Rutherford K.M."/>
            <person name="van Vliet A.H.M."/>
            <person name="Whitehead S."/>
            <person name="Barrell B.G."/>
        </authorList>
    </citation>
    <scope>NUCLEOTIDE SEQUENCE [LARGE SCALE GENOMIC DNA]</scope>
    <source>
        <strain>ATCC 700819 / NCTC 11168</strain>
    </source>
</reference>
<reference key="2">
    <citation type="journal article" date="2012" name="Acta Crystallogr. F">
        <title>Structure of anabolic ornithine carbamoyltransferase from Campylobacter jejuni at 2.7 A resolution.</title>
        <authorList>
            <person name="Shabalin I.G."/>
            <person name="Porebski P.J."/>
            <person name="Cooper D.R."/>
            <person name="Grabowski M."/>
            <person name="Onopriyenko O."/>
            <person name="Grimshaw S."/>
            <person name="Savchenko A."/>
            <person name="Chruszcz M."/>
            <person name="Minor W."/>
        </authorList>
    </citation>
    <scope>X-RAY CRYSTALLOGRAPHY (2.70 ANGSTROMS)</scope>
    <scope>FUNCTION</scope>
    <scope>PATHWAY</scope>
    <scope>SUBUNIT</scope>
    <source>
        <strain>ATCC 700819 / NCTC 11168</strain>
    </source>
</reference>
<dbReference type="EC" id="2.1.3.3" evidence="1"/>
<dbReference type="EMBL" id="AL111168">
    <property type="protein sequence ID" value="CAL35112.1"/>
    <property type="molecule type" value="Genomic_DNA"/>
</dbReference>
<dbReference type="PIR" id="G81374">
    <property type="entry name" value="G81374"/>
</dbReference>
<dbReference type="RefSeq" id="WP_002858026.1">
    <property type="nucleotide sequence ID" value="NZ_SZUC01000001.1"/>
</dbReference>
<dbReference type="RefSeq" id="YP_002344389.1">
    <property type="nucleotide sequence ID" value="NC_002163.1"/>
</dbReference>
<dbReference type="PDB" id="3TPF">
    <property type="method" value="X-ray"/>
    <property type="resolution" value="2.70 A"/>
    <property type="chains" value="A/B/C/D/E/F=1-306"/>
</dbReference>
<dbReference type="PDBsum" id="3TPF"/>
<dbReference type="SMR" id="Q9PNU6"/>
<dbReference type="IntAct" id="Q9PNU6">
    <property type="interactions" value="68"/>
</dbReference>
<dbReference type="STRING" id="192222.Cj0994c"/>
<dbReference type="PaxDb" id="192222-Cj0994c"/>
<dbReference type="EnsemblBacteria" id="CAL35112">
    <property type="protein sequence ID" value="CAL35112"/>
    <property type="gene ID" value="Cj0994c"/>
</dbReference>
<dbReference type="GeneID" id="905285"/>
<dbReference type="KEGG" id="cje:Cj0994c"/>
<dbReference type="PATRIC" id="fig|192222.6.peg.976"/>
<dbReference type="eggNOG" id="COG0078">
    <property type="taxonomic scope" value="Bacteria"/>
</dbReference>
<dbReference type="HOGENOM" id="CLU_043846_3_2_7"/>
<dbReference type="OrthoDB" id="9802587at2"/>
<dbReference type="BRENDA" id="2.1.3.3">
    <property type="organism ID" value="1087"/>
</dbReference>
<dbReference type="UniPathway" id="UPA00068">
    <property type="reaction ID" value="UER00112"/>
</dbReference>
<dbReference type="EvolutionaryTrace" id="Q9PNU6"/>
<dbReference type="Proteomes" id="UP000000799">
    <property type="component" value="Chromosome"/>
</dbReference>
<dbReference type="GO" id="GO:0005737">
    <property type="term" value="C:cytoplasm"/>
    <property type="evidence" value="ECO:0007669"/>
    <property type="project" value="UniProtKB-SubCell"/>
</dbReference>
<dbReference type="GO" id="GO:0016597">
    <property type="term" value="F:amino acid binding"/>
    <property type="evidence" value="ECO:0007669"/>
    <property type="project" value="InterPro"/>
</dbReference>
<dbReference type="GO" id="GO:0004585">
    <property type="term" value="F:ornithine carbamoyltransferase activity"/>
    <property type="evidence" value="ECO:0007669"/>
    <property type="project" value="UniProtKB-UniRule"/>
</dbReference>
<dbReference type="GO" id="GO:0042450">
    <property type="term" value="P:arginine biosynthetic process via ornithine"/>
    <property type="evidence" value="ECO:0007669"/>
    <property type="project" value="TreeGrafter"/>
</dbReference>
<dbReference type="GO" id="GO:0019240">
    <property type="term" value="P:citrulline biosynthetic process"/>
    <property type="evidence" value="ECO:0007669"/>
    <property type="project" value="TreeGrafter"/>
</dbReference>
<dbReference type="GO" id="GO:0006526">
    <property type="term" value="P:L-arginine biosynthetic process"/>
    <property type="evidence" value="ECO:0007669"/>
    <property type="project" value="UniProtKB-UniRule"/>
</dbReference>
<dbReference type="FunFam" id="3.40.50.1370:FF:000008">
    <property type="entry name" value="Ornithine carbamoyltransferase"/>
    <property type="match status" value="1"/>
</dbReference>
<dbReference type="Gene3D" id="3.40.50.1370">
    <property type="entry name" value="Aspartate/ornithine carbamoyltransferase"/>
    <property type="match status" value="2"/>
</dbReference>
<dbReference type="HAMAP" id="MF_01109">
    <property type="entry name" value="OTCase"/>
    <property type="match status" value="1"/>
</dbReference>
<dbReference type="InterPro" id="IPR006132">
    <property type="entry name" value="Asp/Orn_carbamoyltranf_P-bd"/>
</dbReference>
<dbReference type="InterPro" id="IPR006130">
    <property type="entry name" value="Asp/Orn_carbamoylTrfase"/>
</dbReference>
<dbReference type="InterPro" id="IPR036901">
    <property type="entry name" value="Asp/Orn_carbamoylTrfase_sf"/>
</dbReference>
<dbReference type="InterPro" id="IPR006131">
    <property type="entry name" value="Asp_carbamoyltransf_Asp/Orn-bd"/>
</dbReference>
<dbReference type="InterPro" id="IPR002292">
    <property type="entry name" value="Orn/put_carbamltrans"/>
</dbReference>
<dbReference type="InterPro" id="IPR024904">
    <property type="entry name" value="OTCase_ArgI"/>
</dbReference>
<dbReference type="NCBIfam" id="TIGR00658">
    <property type="entry name" value="orni_carb_tr"/>
    <property type="match status" value="1"/>
</dbReference>
<dbReference type="NCBIfam" id="NF001986">
    <property type="entry name" value="PRK00779.1"/>
    <property type="match status" value="1"/>
</dbReference>
<dbReference type="PANTHER" id="PTHR45753">
    <property type="entry name" value="ORNITHINE CARBAMOYLTRANSFERASE, MITOCHONDRIAL"/>
    <property type="match status" value="1"/>
</dbReference>
<dbReference type="PANTHER" id="PTHR45753:SF3">
    <property type="entry name" value="ORNITHINE TRANSCARBAMYLASE, MITOCHONDRIAL"/>
    <property type="match status" value="1"/>
</dbReference>
<dbReference type="Pfam" id="PF00185">
    <property type="entry name" value="OTCace"/>
    <property type="match status" value="1"/>
</dbReference>
<dbReference type="Pfam" id="PF02729">
    <property type="entry name" value="OTCace_N"/>
    <property type="match status" value="1"/>
</dbReference>
<dbReference type="PRINTS" id="PR00100">
    <property type="entry name" value="AOTCASE"/>
</dbReference>
<dbReference type="PRINTS" id="PR00102">
    <property type="entry name" value="OTCASE"/>
</dbReference>
<dbReference type="SUPFAM" id="SSF53671">
    <property type="entry name" value="Aspartate/ornithine carbamoyltransferase"/>
    <property type="match status" value="1"/>
</dbReference>
<dbReference type="PROSITE" id="PS00097">
    <property type="entry name" value="CARBAMOYLTRANSFERASE"/>
    <property type="match status" value="1"/>
</dbReference>
<comment type="function">
    <text evidence="3">Reversibly catalyzes the transfer of the carbamoyl group from carbamoyl phosphate (CP) to the N(epsilon) atom of ornithine (ORN) to produce L-citrulline, which is a substrate for argininosuccinate synthetase (ArgG) involved in the final step in arginine biosynthesis.</text>
</comment>
<comment type="catalytic activity">
    <reaction evidence="1">
        <text>carbamoyl phosphate + L-ornithine = L-citrulline + phosphate + H(+)</text>
        <dbReference type="Rhea" id="RHEA:19513"/>
        <dbReference type="ChEBI" id="CHEBI:15378"/>
        <dbReference type="ChEBI" id="CHEBI:43474"/>
        <dbReference type="ChEBI" id="CHEBI:46911"/>
        <dbReference type="ChEBI" id="CHEBI:57743"/>
        <dbReference type="ChEBI" id="CHEBI:58228"/>
        <dbReference type="EC" id="2.1.3.3"/>
    </reaction>
</comment>
<comment type="pathway">
    <text evidence="3">Amino-acid biosynthesis; L-arginine biosynthesis; L-arginine from L-ornithine and carbamoyl phosphate: step 1/3.</text>
</comment>
<comment type="subunit">
    <text evidence="3">Homohexamer; dimer of trimers.</text>
</comment>
<comment type="subcellular location">
    <subcellularLocation>
        <location evidence="1">Cytoplasm</location>
    </subcellularLocation>
</comment>
<comment type="similarity">
    <text evidence="1">Belongs to the aspartate/ornithine carbamoyltransferase superfamily. OTCase family.</text>
</comment>
<proteinExistence type="evidence at protein level"/>
<sequence length="306" mass="34976">MKHFLTLRDFSKEEILSLVNHASELKKEPKKLLQDKTLAMIFEKNSTRTRMAFELAITELGGKALFLSSNDLQLSRGEPVKDTARVIGAMVDFVMMRVNKHETLLEFARYSKAPVINALSELYHPTQVLGDLFTIKEWNKMQNGIAKVAFIGDSNNMCNSWLITAAILGFEISIAMPKNYKISPEIWEFAMKQALISGAKISLGYDKFEALKDKDVVITDTWVSMGEENEKERKIKEFEGFMIDEKAMSVANKDAILLHCLPAYRGYEVSEEIFEKHADVIFEEARNRLYVVKALLCFLDNQRGRE</sequence>
<evidence type="ECO:0000255" key="1">
    <source>
        <dbReference type="HAMAP-Rule" id="MF_01109"/>
    </source>
</evidence>
<evidence type="ECO:0000303" key="2">
    <source>
    </source>
</evidence>
<evidence type="ECO:0000305" key="3">
    <source>
    </source>
</evidence>
<evidence type="ECO:0007829" key="4">
    <source>
        <dbReference type="PDB" id="3TPF"/>
    </source>
</evidence>
<keyword id="KW-0002">3D-structure</keyword>
<keyword id="KW-0028">Amino-acid biosynthesis</keyword>
<keyword id="KW-0055">Arginine biosynthesis</keyword>
<keyword id="KW-0963">Cytoplasm</keyword>
<keyword id="KW-1185">Reference proteome</keyword>
<keyword id="KW-0808">Transferase</keyword>
<accession>Q9PNU6</accession>
<accession>Q0P9Q8</accession>